<dbReference type="EMBL" id="M23532">
    <property type="protein sequence ID" value="AAA33636.1"/>
    <property type="molecule type" value="Genomic_DNA"/>
</dbReference>
<dbReference type="EMBL" id="DS544940">
    <property type="protein sequence ID" value="EDQ73309.1"/>
    <property type="molecule type" value="Genomic_DNA"/>
</dbReference>
<dbReference type="EMBL" id="DS544940">
    <property type="protein sequence ID" value="EDQ73393.1"/>
    <property type="molecule type" value="Genomic_DNA"/>
</dbReference>
<dbReference type="PIR" id="JS0171">
    <property type="entry name" value="JS0171"/>
</dbReference>
<dbReference type="RefSeq" id="XP_001761868.1">
    <property type="nucleotide sequence ID" value="XM_001761816.1"/>
</dbReference>
<dbReference type="RefSeq" id="XP_001761952.1">
    <property type="nucleotide sequence ID" value="XM_001761900.1"/>
</dbReference>
<dbReference type="SMR" id="P20866"/>
<dbReference type="FunCoup" id="P20866">
    <property type="interactions" value="1020"/>
</dbReference>
<dbReference type="PaxDb" id="3218-PP1S51_303V6.1"/>
<dbReference type="eggNOG" id="ENOG502QPU1">
    <property type="taxonomic scope" value="Eukaryota"/>
</dbReference>
<dbReference type="HOGENOM" id="CLU_057943_2_0_1"/>
<dbReference type="InParanoid" id="P20866"/>
<dbReference type="OMA" id="WFKAGSL"/>
<dbReference type="Proteomes" id="UP000006727">
    <property type="component" value="Unplaced"/>
</dbReference>
<dbReference type="GO" id="GO:0009535">
    <property type="term" value="C:chloroplast thylakoid membrane"/>
    <property type="evidence" value="ECO:0000318"/>
    <property type="project" value="GO_Central"/>
</dbReference>
<dbReference type="GO" id="GO:0009522">
    <property type="term" value="C:photosystem I"/>
    <property type="evidence" value="ECO:0007669"/>
    <property type="project" value="UniProtKB-KW"/>
</dbReference>
<dbReference type="GO" id="GO:0009523">
    <property type="term" value="C:photosystem II"/>
    <property type="evidence" value="ECO:0007669"/>
    <property type="project" value="UniProtKB-KW"/>
</dbReference>
<dbReference type="GO" id="GO:0016168">
    <property type="term" value="F:chlorophyll binding"/>
    <property type="evidence" value="ECO:0007669"/>
    <property type="project" value="UniProtKB-KW"/>
</dbReference>
<dbReference type="GO" id="GO:0046872">
    <property type="term" value="F:metal ion binding"/>
    <property type="evidence" value="ECO:0007669"/>
    <property type="project" value="UniProtKB-KW"/>
</dbReference>
<dbReference type="GO" id="GO:0009768">
    <property type="term" value="P:photosynthesis, light harvesting in photosystem I"/>
    <property type="evidence" value="ECO:0000318"/>
    <property type="project" value="GO_Central"/>
</dbReference>
<dbReference type="GO" id="GO:0009416">
    <property type="term" value="P:response to light stimulus"/>
    <property type="evidence" value="ECO:0000318"/>
    <property type="project" value="GO_Central"/>
</dbReference>
<dbReference type="FunFam" id="1.10.3460.10:FF:000001">
    <property type="entry name" value="Chlorophyll a-b binding protein, chloroplastic"/>
    <property type="match status" value="1"/>
</dbReference>
<dbReference type="Gene3D" id="1.10.3460.10">
    <property type="entry name" value="Chlorophyll a/b binding protein domain"/>
    <property type="match status" value="1"/>
</dbReference>
<dbReference type="InterPro" id="IPR001344">
    <property type="entry name" value="Chloro_AB-bd_pln"/>
</dbReference>
<dbReference type="InterPro" id="IPR022796">
    <property type="entry name" value="Chloroa_b-bind"/>
</dbReference>
<dbReference type="PANTHER" id="PTHR21649">
    <property type="entry name" value="CHLOROPHYLL A/B BINDING PROTEIN"/>
    <property type="match status" value="1"/>
</dbReference>
<dbReference type="Pfam" id="PF00504">
    <property type="entry name" value="Chloroa_b-bind"/>
    <property type="match status" value="1"/>
</dbReference>
<dbReference type="SUPFAM" id="SSF103511">
    <property type="entry name" value="Chlorophyll a-b binding protein"/>
    <property type="match status" value="1"/>
</dbReference>
<keyword id="KW-0007">Acetylation</keyword>
<keyword id="KW-0148">Chlorophyll</keyword>
<keyword id="KW-0150">Chloroplast</keyword>
<keyword id="KW-0157">Chromophore</keyword>
<keyword id="KW-0460">Magnesium</keyword>
<keyword id="KW-0472">Membrane</keyword>
<keyword id="KW-0479">Metal-binding</keyword>
<keyword id="KW-0597">Phosphoprotein</keyword>
<keyword id="KW-0602">Photosynthesis</keyword>
<keyword id="KW-0603">Photosystem I</keyword>
<keyword id="KW-0604">Photosystem II</keyword>
<keyword id="KW-0934">Plastid</keyword>
<keyword id="KW-1185">Reference proteome</keyword>
<keyword id="KW-0793">Thylakoid</keyword>
<keyword id="KW-0809">Transit peptide</keyword>
<keyword id="KW-0812">Transmembrane</keyword>
<keyword id="KW-1133">Transmembrane helix</keyword>
<protein>
    <recommendedName>
        <fullName>Chlorophyll a-b binding protein, chloroplastic</fullName>
    </recommendedName>
    <alternativeName>
        <fullName>LHCII type I CAB</fullName>
        <shortName>LHCP</shortName>
    </alternativeName>
</protein>
<feature type="transit peptide" description="Chloroplast" evidence="5">
    <location>
        <begin position="1"/>
        <end position="37"/>
    </location>
</feature>
<feature type="chain" id="PRO_0000003689" description="Chlorophyll a-b binding protein, chloroplastic">
    <location>
        <begin position="38"/>
        <end position="267"/>
    </location>
</feature>
<feature type="transmembrane region" description="Helical" evidence="4">
    <location>
        <begin position="101"/>
        <end position="121"/>
    </location>
</feature>
<feature type="transmembrane region" description="Helical" evidence="4">
    <location>
        <begin position="153"/>
        <end position="173"/>
    </location>
</feature>
<feature type="transmembrane region" description="Helical" evidence="4">
    <location>
        <begin position="221"/>
        <end position="241"/>
    </location>
</feature>
<feature type="binding site" description="axial binding residue" evidence="1">
    <location>
        <position position="59"/>
    </location>
    <ligand>
        <name>chlorophyll b</name>
        <dbReference type="ChEBI" id="CHEBI:61721"/>
        <label>1</label>
    </ligand>
    <ligandPart>
        <name>Mg</name>
        <dbReference type="ChEBI" id="CHEBI:25107"/>
    </ligandPart>
</feature>
<feature type="binding site" evidence="1">
    <location>
        <position position="81"/>
    </location>
    <ligand>
        <name>chlorophyll a</name>
        <dbReference type="ChEBI" id="CHEBI:58416"/>
        <label>1</label>
    </ligand>
</feature>
<feature type="binding site" evidence="1">
    <location>
        <position position="87"/>
    </location>
    <ligand>
        <name>chlorophyll a</name>
        <dbReference type="ChEBI" id="CHEBI:58416"/>
        <label>1</label>
    </ligand>
</feature>
<feature type="binding site" description="axial binding residue" evidence="3">
    <location>
        <position position="100"/>
    </location>
    <ligand>
        <name>chlorophyll a</name>
        <dbReference type="ChEBI" id="CHEBI:58416"/>
        <label>1</label>
    </ligand>
    <ligandPart>
        <name>Mg</name>
        <dbReference type="ChEBI" id="CHEBI:25107"/>
    </ligandPart>
</feature>
<feature type="binding site" description="axial binding residue" evidence="3">
    <location>
        <position position="103"/>
    </location>
    <ligand>
        <name>chlorophyll a</name>
        <dbReference type="ChEBI" id="CHEBI:58416"/>
        <label>2</label>
    </ligand>
    <ligandPart>
        <name>Mg</name>
        <dbReference type="ChEBI" id="CHEBI:25107"/>
    </ligandPart>
</feature>
<feature type="binding site" evidence="1">
    <location>
        <position position="105"/>
    </location>
    <ligand>
        <name>chlorophyll b</name>
        <dbReference type="ChEBI" id="CHEBI:61721"/>
        <label>2</label>
    </ligand>
</feature>
<feature type="binding site" evidence="1">
    <location>
        <position position="138"/>
    </location>
    <ligand>
        <name>chlorophyll a</name>
        <dbReference type="ChEBI" id="CHEBI:58416"/>
        <label>3</label>
    </ligand>
</feature>
<feature type="binding site" evidence="1">
    <location>
        <position position="148"/>
    </location>
    <ligand>
        <name>chlorophyll a</name>
        <dbReference type="ChEBI" id="CHEBI:58416"/>
        <label>3</label>
    </ligand>
</feature>
<feature type="binding site" description="axial binding residue" evidence="3">
    <location>
        <position position="154"/>
    </location>
    <ligand>
        <name>chlorophyll b</name>
        <dbReference type="ChEBI" id="CHEBI:61721"/>
        <label>2</label>
    </ligand>
    <ligandPart>
        <name>Mg</name>
        <dbReference type="ChEBI" id="CHEBI:25107"/>
    </ligandPart>
</feature>
<feature type="binding site" evidence="1">
    <location>
        <position position="158"/>
    </location>
    <ligand>
        <name>chlorophyll b</name>
        <dbReference type="ChEBI" id="CHEBI:61721"/>
        <label>3</label>
    </ligand>
</feature>
<feature type="binding site" evidence="1">
    <location>
        <position position="166"/>
    </location>
    <ligand>
        <name>chlorophyll b</name>
        <dbReference type="ChEBI" id="CHEBI:61721"/>
        <label>4</label>
    </ligand>
</feature>
<feature type="binding site" evidence="2">
    <location>
        <position position="166"/>
    </location>
    <ligand>
        <name>chlorophyll b</name>
        <dbReference type="ChEBI" id="CHEBI:61721"/>
        <label>5</label>
    </ligand>
</feature>
<feature type="binding site" description="axial binding residue" evidence="3">
    <location>
        <position position="174"/>
    </location>
    <ligand>
        <name>chlorophyll b</name>
        <dbReference type="ChEBI" id="CHEBI:61721"/>
        <label>3</label>
    </ligand>
    <ligandPart>
        <name>Mg</name>
        <dbReference type="ChEBI" id="CHEBI:25107"/>
    </ligandPart>
</feature>
<feature type="binding site" evidence="1">
    <location>
        <position position="177"/>
    </location>
    <ligand>
        <name>chlorophyll b</name>
        <dbReference type="ChEBI" id="CHEBI:61721"/>
        <label>4</label>
    </ligand>
</feature>
<feature type="binding site" evidence="1">
    <location>
        <position position="183"/>
    </location>
    <ligand>
        <name>chlorophyll b</name>
        <dbReference type="ChEBI" id="CHEBI:61721"/>
        <label>2</label>
    </ligand>
</feature>
<feature type="binding site" evidence="1">
    <location>
        <position position="214"/>
    </location>
    <ligand>
        <name>chlorophyll a</name>
        <dbReference type="ChEBI" id="CHEBI:58416"/>
        <label>5</label>
    </ligand>
</feature>
<feature type="binding site" description="axial binding residue" evidence="3">
    <location>
        <position position="215"/>
    </location>
    <ligand>
        <name>chlorophyll a</name>
        <dbReference type="ChEBI" id="CHEBI:58416"/>
        <label>3</label>
    </ligand>
    <ligandPart>
        <name>Mg</name>
        <dbReference type="ChEBI" id="CHEBI:25107"/>
    </ligandPart>
</feature>
<feature type="binding site" description="axial binding residue" evidence="3">
    <location>
        <position position="218"/>
    </location>
    <ligand>
        <name>chlorophyll a</name>
        <dbReference type="ChEBI" id="CHEBI:58416"/>
        <label>4</label>
    </ligand>
    <ligandPart>
        <name>Mg</name>
        <dbReference type="ChEBI" id="CHEBI:25107"/>
    </ligandPart>
</feature>
<feature type="binding site" evidence="1">
    <location>
        <position position="220"/>
    </location>
    <ligand>
        <name>chlorophyll a</name>
        <dbReference type="ChEBI" id="CHEBI:58416"/>
        <label>1</label>
    </ligand>
</feature>
<feature type="binding site" description="axial binding residue" evidence="3">
    <location>
        <position position="232"/>
    </location>
    <ligand>
        <name>chlorophyll a</name>
        <dbReference type="ChEBI" id="CHEBI:58416"/>
        <label>5</label>
    </ligand>
    <ligandPart>
        <name>Mg</name>
        <dbReference type="ChEBI" id="CHEBI:25107"/>
    </ligandPart>
</feature>
<feature type="binding site" description="axial binding residue" evidence="3">
    <location>
        <position position="247"/>
    </location>
    <ligand>
        <name>chlorophyll a</name>
        <dbReference type="ChEBI" id="CHEBI:58416"/>
        <label>6</label>
    </ligand>
    <ligandPart>
        <name>Mg</name>
        <dbReference type="ChEBI" id="CHEBI:25107"/>
    </ligandPart>
</feature>
<feature type="binding site" evidence="1">
    <location>
        <position position="256"/>
    </location>
    <ligand>
        <name>chlorophyll a</name>
        <dbReference type="ChEBI" id="CHEBI:58416"/>
        <label>6</label>
    </ligand>
</feature>
<feature type="modified residue" description="N2-acetylarginine" evidence="1">
    <location>
        <position position="38"/>
    </location>
</feature>
<feature type="modified residue" description="Phosphothreonine" evidence="1">
    <location>
        <position position="40"/>
    </location>
</feature>
<feature type="sequence conflict" description="In Ref. 1; AAA33636." evidence="5" ref="1">
    <original>V</original>
    <variation>VL</variation>
    <location>
        <position position="28"/>
    </location>
</feature>
<feature type="sequence conflict" description="In Ref. 1; AAA33636." evidence="5" ref="1">
    <original>S</original>
    <variation>T</variation>
    <location>
        <position position="49"/>
    </location>
</feature>
<feature type="sequence conflict" description="In Ref. 1; AAA33636." evidence="5" ref="1">
    <original>TNFTPGN</original>
    <variation>PTSPPGTR</variation>
    <location>
        <begin position="261"/>
        <end position="267"/>
    </location>
</feature>
<sequence>MAAATAMHSTALAGQSLVKPVNELSRKVGNVEARVTMRRTVSKSAGSDSIWYGADRPKFLGPFSGETPSYLNGEFAGDYGWDTAGLSSDPETFARNRELEVIHARWAMLGALGCLTPELLAKSGVKFGEAVWFKAGAQIFSEGGLDYLGNPSLVHAQSILAIWACQVVLMGAVEGYRVAGGPLGEVTDPIYPGGSFDPLGLADDPDTFAELKVKEIKNGRLAMFSMFGFFVQAIVTGKGPLENLNDHLADPVANNAWAYATNFTPGN</sequence>
<evidence type="ECO:0000250" key="1"/>
<evidence type="ECO:0000250" key="2">
    <source>
        <dbReference type="UniProtKB" id="P07371"/>
    </source>
</evidence>
<evidence type="ECO:0000250" key="3">
    <source>
        <dbReference type="UniProtKB" id="P12333"/>
    </source>
</evidence>
<evidence type="ECO:0000255" key="4"/>
<evidence type="ECO:0000305" key="5"/>
<proteinExistence type="inferred from homology"/>
<reference key="1">
    <citation type="journal article" date="1989" name="Gene">
        <title>Cloning and nucleotide sequence analysis of genes coding for the major chlorophyll-binding protein of the moss Physcomitrella patens and the halotolerant alga Dunaliella salina.</title>
        <authorList>
            <person name="Long Z."/>
            <person name="Wang S.Y."/>
            <person name="Nelson N."/>
        </authorList>
    </citation>
    <scope>NUCLEOTIDE SEQUENCE [GENOMIC DNA]</scope>
</reference>
<reference key="2">
    <citation type="journal article" date="2008" name="Science">
        <title>The Physcomitrella genome reveals evolutionary insights into the conquest of land by plants.</title>
        <authorList>
            <person name="Rensing S.A."/>
            <person name="Lang D."/>
            <person name="Zimmer A.D."/>
            <person name="Terry A."/>
            <person name="Salamov A."/>
            <person name="Shapiro H."/>
            <person name="Nishiyama T."/>
            <person name="Perroud P.-F."/>
            <person name="Lindquist E.A."/>
            <person name="Kamisugi Y."/>
            <person name="Tanahashi T."/>
            <person name="Sakakibara K."/>
            <person name="Fujita T."/>
            <person name="Oishi K."/>
            <person name="Shin-I T."/>
            <person name="Kuroki Y."/>
            <person name="Toyoda A."/>
            <person name="Suzuki Y."/>
            <person name="Hashimoto S.-I."/>
            <person name="Yamaguchi K."/>
            <person name="Sugano S."/>
            <person name="Kohara Y."/>
            <person name="Fujiyama A."/>
            <person name="Anterola A."/>
            <person name="Aoki S."/>
            <person name="Ashton N."/>
            <person name="Barbazuk W.B."/>
            <person name="Barker E."/>
            <person name="Bennetzen J.L."/>
            <person name="Blankenship R."/>
            <person name="Cho S.H."/>
            <person name="Dutcher S.K."/>
            <person name="Estelle M."/>
            <person name="Fawcett J.A."/>
            <person name="Gundlach H."/>
            <person name="Hanada K."/>
            <person name="Heyl A."/>
            <person name="Hicks K.A."/>
            <person name="Hughes J."/>
            <person name="Lohr M."/>
            <person name="Mayer K."/>
            <person name="Melkozernov A."/>
            <person name="Murata T."/>
            <person name="Nelson D.R."/>
            <person name="Pils B."/>
            <person name="Prigge M."/>
            <person name="Reiss B."/>
            <person name="Renner T."/>
            <person name="Rombauts S."/>
            <person name="Rushton P.J."/>
            <person name="Sanderfoot A."/>
            <person name="Schween G."/>
            <person name="Shiu S.-H."/>
            <person name="Stueber K."/>
            <person name="Theodoulou F.L."/>
            <person name="Tu H."/>
            <person name="Van de Peer Y."/>
            <person name="Verrier P.J."/>
            <person name="Waters E."/>
            <person name="Wood A."/>
            <person name="Yang L."/>
            <person name="Cove D."/>
            <person name="Cuming A.C."/>
            <person name="Hasebe M."/>
            <person name="Lucas S."/>
            <person name="Mishler B.D."/>
            <person name="Reski R."/>
            <person name="Grigoriev I.V."/>
            <person name="Quatrano R.S."/>
            <person name="Boore J.L."/>
        </authorList>
    </citation>
    <scope>NUCLEOTIDE SEQUENCE [LARGE SCALE GENOMIC DNA]</scope>
    <source>
        <strain>cv. Gransden 2004</strain>
    </source>
</reference>
<organism>
    <name type="scientific">Physcomitrium patens</name>
    <name type="common">Spreading-leaved earth moss</name>
    <name type="synonym">Physcomitrella patens</name>
    <dbReference type="NCBI Taxonomy" id="3218"/>
    <lineage>
        <taxon>Eukaryota</taxon>
        <taxon>Viridiplantae</taxon>
        <taxon>Streptophyta</taxon>
        <taxon>Embryophyta</taxon>
        <taxon>Bryophyta</taxon>
        <taxon>Bryophytina</taxon>
        <taxon>Bryopsida</taxon>
        <taxon>Funariidae</taxon>
        <taxon>Funariales</taxon>
        <taxon>Funariaceae</taxon>
        <taxon>Physcomitrium</taxon>
    </lineage>
</organism>
<comment type="function">
    <text>The light-harvesting complex (LHC) functions as a light receptor, it captures and delivers excitation energy to photosystems with which it is closely associated.</text>
</comment>
<comment type="cofactor">
    <text evidence="1">Binds at least 14 chlorophylls (8 Chl-a and 6 Chl-b) and carotenoids such as lutein and neoxanthin.</text>
</comment>
<comment type="subunit">
    <text>The LHC complex consists of chlorophyll a-b binding proteins.</text>
</comment>
<comment type="subcellular location">
    <subcellularLocation>
        <location>Plastid</location>
        <location>Chloroplast thylakoid membrane</location>
        <topology>Multi-pass membrane protein</topology>
    </subcellularLocation>
</comment>
<comment type="domain">
    <text>The N-terminus of the protein extends into the stroma where it is involved with adhesion of granal membranes and post-translational modifications; both are believed to mediate the distribution of excitation energy between photosystems I and II.</text>
</comment>
<comment type="PTM">
    <text evidence="1">Photoregulated by reversible phosphorylation of its threonine residues.</text>
</comment>
<comment type="similarity">
    <text evidence="5">Belongs to the light-harvesting chlorophyll a/b-binding (LHC) protein family.</text>
</comment>
<accession>P20866</accession>
<accession>A9S6F4</accession>
<gene>
    <name type="ORF">PHYPADRAFT_124625</name>
    <name type="ORF">PHYPADRAFT_163091</name>
</gene>
<name>CB2_PHYPA</name>